<gene>
    <name evidence="1" type="primary">ihfA</name>
    <name evidence="1" type="synonym">himA</name>
    <name type="ordered locus">Sputw3181_2179</name>
</gene>
<organism>
    <name type="scientific">Shewanella sp. (strain W3-18-1)</name>
    <dbReference type="NCBI Taxonomy" id="351745"/>
    <lineage>
        <taxon>Bacteria</taxon>
        <taxon>Pseudomonadati</taxon>
        <taxon>Pseudomonadota</taxon>
        <taxon>Gammaproteobacteria</taxon>
        <taxon>Alteromonadales</taxon>
        <taxon>Shewanellaceae</taxon>
        <taxon>Shewanella</taxon>
    </lineage>
</organism>
<keyword id="KW-0233">DNA recombination</keyword>
<keyword id="KW-0238">DNA-binding</keyword>
<keyword id="KW-0804">Transcription</keyword>
<keyword id="KW-0805">Transcription regulation</keyword>
<keyword id="KW-0810">Translation regulation</keyword>
<feature type="chain" id="PRO_1000060573" description="Integration host factor subunit alpha">
    <location>
        <begin position="1"/>
        <end position="98"/>
    </location>
</feature>
<feature type="region of interest" description="Disordered" evidence="2">
    <location>
        <begin position="49"/>
        <end position="70"/>
    </location>
</feature>
<comment type="function">
    <text evidence="1">This protein is one of the two subunits of integration host factor, a specific DNA-binding protein that functions in genetic recombination as well as in transcriptional and translational control.</text>
</comment>
<comment type="subunit">
    <text evidence="1">Heterodimer of an alpha and a beta chain.</text>
</comment>
<comment type="similarity">
    <text evidence="1">Belongs to the bacterial histone-like protein family.</text>
</comment>
<reference key="1">
    <citation type="submission" date="2006-12" db="EMBL/GenBank/DDBJ databases">
        <title>Complete sequence of Shewanella sp. W3-18-1.</title>
        <authorList>
            <consortium name="US DOE Joint Genome Institute"/>
            <person name="Copeland A."/>
            <person name="Lucas S."/>
            <person name="Lapidus A."/>
            <person name="Barry K."/>
            <person name="Detter J.C."/>
            <person name="Glavina del Rio T."/>
            <person name="Hammon N."/>
            <person name="Israni S."/>
            <person name="Dalin E."/>
            <person name="Tice H."/>
            <person name="Pitluck S."/>
            <person name="Chain P."/>
            <person name="Malfatti S."/>
            <person name="Shin M."/>
            <person name="Vergez L."/>
            <person name="Schmutz J."/>
            <person name="Larimer F."/>
            <person name="Land M."/>
            <person name="Hauser L."/>
            <person name="Kyrpides N."/>
            <person name="Lykidis A."/>
            <person name="Tiedje J."/>
            <person name="Richardson P."/>
        </authorList>
    </citation>
    <scope>NUCLEOTIDE SEQUENCE [LARGE SCALE GENOMIC DNA]</scope>
    <source>
        <strain>W3-18-1</strain>
    </source>
</reference>
<proteinExistence type="inferred from homology"/>
<sequence length="98" mass="10995">MALTKAEMAEHLFETLGMNKRVAKEMVESFFEEIRGALESGEQVKLSGFGNFDLRDKNQRPGRNPKTGEDIPISARRVVTFRPGQKLKTRVEAANTGK</sequence>
<protein>
    <recommendedName>
        <fullName evidence="1">Integration host factor subunit alpha</fullName>
        <shortName evidence="1">IHF-alpha</shortName>
    </recommendedName>
</protein>
<dbReference type="EMBL" id="CP000503">
    <property type="protein sequence ID" value="ABM25007.1"/>
    <property type="molecule type" value="Genomic_DNA"/>
</dbReference>
<dbReference type="RefSeq" id="WP_006081370.1">
    <property type="nucleotide sequence ID" value="NC_008750.1"/>
</dbReference>
<dbReference type="SMR" id="A1RK12"/>
<dbReference type="GeneID" id="67443386"/>
<dbReference type="KEGG" id="shw:Sputw3181_2179"/>
<dbReference type="HOGENOM" id="CLU_105066_1_3_6"/>
<dbReference type="Proteomes" id="UP000002597">
    <property type="component" value="Chromosome"/>
</dbReference>
<dbReference type="GO" id="GO:0005829">
    <property type="term" value="C:cytosol"/>
    <property type="evidence" value="ECO:0007669"/>
    <property type="project" value="TreeGrafter"/>
</dbReference>
<dbReference type="GO" id="GO:0003677">
    <property type="term" value="F:DNA binding"/>
    <property type="evidence" value="ECO:0007669"/>
    <property type="project" value="UniProtKB-UniRule"/>
</dbReference>
<dbReference type="GO" id="GO:0030527">
    <property type="term" value="F:structural constituent of chromatin"/>
    <property type="evidence" value="ECO:0007669"/>
    <property type="project" value="InterPro"/>
</dbReference>
<dbReference type="GO" id="GO:0006310">
    <property type="term" value="P:DNA recombination"/>
    <property type="evidence" value="ECO:0007669"/>
    <property type="project" value="UniProtKB-UniRule"/>
</dbReference>
<dbReference type="GO" id="GO:0009893">
    <property type="term" value="P:positive regulation of metabolic process"/>
    <property type="evidence" value="ECO:0007669"/>
    <property type="project" value="UniProtKB-ARBA"/>
</dbReference>
<dbReference type="GO" id="GO:0006355">
    <property type="term" value="P:regulation of DNA-templated transcription"/>
    <property type="evidence" value="ECO:0007669"/>
    <property type="project" value="UniProtKB-UniRule"/>
</dbReference>
<dbReference type="GO" id="GO:0006417">
    <property type="term" value="P:regulation of translation"/>
    <property type="evidence" value="ECO:0007669"/>
    <property type="project" value="UniProtKB-UniRule"/>
</dbReference>
<dbReference type="CDD" id="cd13835">
    <property type="entry name" value="IHF_A"/>
    <property type="match status" value="1"/>
</dbReference>
<dbReference type="FunFam" id="4.10.520.10:FF:000002">
    <property type="entry name" value="Integration host factor subunit alpha"/>
    <property type="match status" value="1"/>
</dbReference>
<dbReference type="Gene3D" id="4.10.520.10">
    <property type="entry name" value="IHF-like DNA-binding proteins"/>
    <property type="match status" value="1"/>
</dbReference>
<dbReference type="HAMAP" id="MF_00380">
    <property type="entry name" value="IHF_alpha"/>
    <property type="match status" value="1"/>
</dbReference>
<dbReference type="InterPro" id="IPR000119">
    <property type="entry name" value="Hist_DNA-bd"/>
</dbReference>
<dbReference type="InterPro" id="IPR020816">
    <property type="entry name" value="Histone-like_DNA-bd_CS"/>
</dbReference>
<dbReference type="InterPro" id="IPR010992">
    <property type="entry name" value="IHF-like_DNA-bd_dom_sf"/>
</dbReference>
<dbReference type="InterPro" id="IPR005684">
    <property type="entry name" value="IHF_alpha"/>
</dbReference>
<dbReference type="NCBIfam" id="TIGR00987">
    <property type="entry name" value="himA"/>
    <property type="match status" value="1"/>
</dbReference>
<dbReference type="NCBIfam" id="NF001401">
    <property type="entry name" value="PRK00285.1"/>
    <property type="match status" value="1"/>
</dbReference>
<dbReference type="PANTHER" id="PTHR33175">
    <property type="entry name" value="DNA-BINDING PROTEIN HU"/>
    <property type="match status" value="1"/>
</dbReference>
<dbReference type="PANTHER" id="PTHR33175:SF2">
    <property type="entry name" value="INTEGRATION HOST FACTOR SUBUNIT ALPHA"/>
    <property type="match status" value="1"/>
</dbReference>
<dbReference type="Pfam" id="PF00216">
    <property type="entry name" value="Bac_DNA_binding"/>
    <property type="match status" value="1"/>
</dbReference>
<dbReference type="PRINTS" id="PR01727">
    <property type="entry name" value="DNABINDINGHU"/>
</dbReference>
<dbReference type="SMART" id="SM00411">
    <property type="entry name" value="BHL"/>
    <property type="match status" value="1"/>
</dbReference>
<dbReference type="SUPFAM" id="SSF47729">
    <property type="entry name" value="IHF-like DNA-binding proteins"/>
    <property type="match status" value="1"/>
</dbReference>
<dbReference type="PROSITE" id="PS00045">
    <property type="entry name" value="HISTONE_LIKE"/>
    <property type="match status" value="1"/>
</dbReference>
<accession>A1RK12</accession>
<name>IHFA_SHESW</name>
<evidence type="ECO:0000255" key="1">
    <source>
        <dbReference type="HAMAP-Rule" id="MF_00380"/>
    </source>
</evidence>
<evidence type="ECO:0000256" key="2">
    <source>
        <dbReference type="SAM" id="MobiDB-lite"/>
    </source>
</evidence>